<proteinExistence type="evidence at transcript level"/>
<accession>A8WIP6</accession>
<accession>Q5PRE2</accession>
<gene>
    <name type="primary">cdk20</name>
    <name type="synonym">ccrk</name>
    <name type="ORF">si:dkeyp-77f7.1</name>
    <name type="ORF">zgc:101530</name>
</gene>
<name>CDK20_DANRE</name>
<comment type="function">
    <text evidence="1 4">Involved in cell growth. Activates cdk2, a kinase involved in the control of the cell cycle, by phosphorylating residue 'Thr-160' (By similarity). Required for high-level Shh responses in the developing neural tube. Together with tbc1d32, controls the structure of the primary cilium by coordinating assembly of the ciliary membrane and axoneme, allowing gli2 to be properly activated in response to SHH signaling.</text>
</comment>
<comment type="catalytic activity">
    <reaction>
        <text>L-seryl-[protein] + ATP = O-phospho-L-seryl-[protein] + ADP + H(+)</text>
        <dbReference type="Rhea" id="RHEA:17989"/>
        <dbReference type="Rhea" id="RHEA-COMP:9863"/>
        <dbReference type="Rhea" id="RHEA-COMP:11604"/>
        <dbReference type="ChEBI" id="CHEBI:15378"/>
        <dbReference type="ChEBI" id="CHEBI:29999"/>
        <dbReference type="ChEBI" id="CHEBI:30616"/>
        <dbReference type="ChEBI" id="CHEBI:83421"/>
        <dbReference type="ChEBI" id="CHEBI:456216"/>
        <dbReference type="EC" id="2.7.11.22"/>
    </reaction>
</comment>
<comment type="catalytic activity">
    <reaction>
        <text>L-threonyl-[protein] + ATP = O-phospho-L-threonyl-[protein] + ADP + H(+)</text>
        <dbReference type="Rhea" id="RHEA:46608"/>
        <dbReference type="Rhea" id="RHEA-COMP:11060"/>
        <dbReference type="Rhea" id="RHEA-COMP:11605"/>
        <dbReference type="ChEBI" id="CHEBI:15378"/>
        <dbReference type="ChEBI" id="CHEBI:30013"/>
        <dbReference type="ChEBI" id="CHEBI:30616"/>
        <dbReference type="ChEBI" id="CHEBI:61977"/>
        <dbReference type="ChEBI" id="CHEBI:456216"/>
        <dbReference type="EC" id="2.7.11.22"/>
    </reaction>
</comment>
<comment type="subunit">
    <text evidence="1">Monomer. Interacts with tbc1d32.</text>
</comment>
<comment type="subcellular location">
    <subcellularLocation>
        <location evidence="1">Nucleus</location>
    </subcellularLocation>
    <subcellularLocation>
        <location evidence="1">Cytoplasm</location>
    </subcellularLocation>
    <subcellularLocation>
        <location evidence="1">Cell projection</location>
        <location evidence="1">Cilium</location>
    </subcellularLocation>
</comment>
<comment type="disruption phenotype">
    <text evidence="4">Fish lacking cdk20 are viable during embryogenesis and early larval stages, but exhibit curvature of the body axis and curled cilia in distal kidney tubules.</text>
</comment>
<comment type="similarity">
    <text evidence="5">Belongs to the protein kinase superfamily. CMGC Ser/Thr protein kinase family. CDC2/CDKX subfamily.</text>
</comment>
<comment type="sequence caution" evidence="5">
    <conflict type="frameshift">
        <sequence resource="EMBL-CDS" id="AAH86697"/>
    </conflict>
</comment>
<reference key="1">
    <citation type="journal article" date="2013" name="Nature">
        <title>The zebrafish reference genome sequence and its relationship to the human genome.</title>
        <authorList>
            <person name="Howe K."/>
            <person name="Clark M.D."/>
            <person name="Torroja C.F."/>
            <person name="Torrance J."/>
            <person name="Berthelot C."/>
            <person name="Muffato M."/>
            <person name="Collins J.E."/>
            <person name="Humphray S."/>
            <person name="McLaren K."/>
            <person name="Matthews L."/>
            <person name="McLaren S."/>
            <person name="Sealy I."/>
            <person name="Caccamo M."/>
            <person name="Churcher C."/>
            <person name="Scott C."/>
            <person name="Barrett J.C."/>
            <person name="Koch R."/>
            <person name="Rauch G.J."/>
            <person name="White S."/>
            <person name="Chow W."/>
            <person name="Kilian B."/>
            <person name="Quintais L.T."/>
            <person name="Guerra-Assuncao J.A."/>
            <person name="Zhou Y."/>
            <person name="Gu Y."/>
            <person name="Yen J."/>
            <person name="Vogel J.H."/>
            <person name="Eyre T."/>
            <person name="Redmond S."/>
            <person name="Banerjee R."/>
            <person name="Chi J."/>
            <person name="Fu B."/>
            <person name="Langley E."/>
            <person name="Maguire S.F."/>
            <person name="Laird G.K."/>
            <person name="Lloyd D."/>
            <person name="Kenyon E."/>
            <person name="Donaldson S."/>
            <person name="Sehra H."/>
            <person name="Almeida-King J."/>
            <person name="Loveland J."/>
            <person name="Trevanion S."/>
            <person name="Jones M."/>
            <person name="Quail M."/>
            <person name="Willey D."/>
            <person name="Hunt A."/>
            <person name="Burton J."/>
            <person name="Sims S."/>
            <person name="McLay K."/>
            <person name="Plumb B."/>
            <person name="Davis J."/>
            <person name="Clee C."/>
            <person name="Oliver K."/>
            <person name="Clark R."/>
            <person name="Riddle C."/>
            <person name="Elliot D."/>
            <person name="Threadgold G."/>
            <person name="Harden G."/>
            <person name="Ware D."/>
            <person name="Begum S."/>
            <person name="Mortimore B."/>
            <person name="Kerry G."/>
            <person name="Heath P."/>
            <person name="Phillimore B."/>
            <person name="Tracey A."/>
            <person name="Corby N."/>
            <person name="Dunn M."/>
            <person name="Johnson C."/>
            <person name="Wood J."/>
            <person name="Clark S."/>
            <person name="Pelan S."/>
            <person name="Griffiths G."/>
            <person name="Smith M."/>
            <person name="Glithero R."/>
            <person name="Howden P."/>
            <person name="Barker N."/>
            <person name="Lloyd C."/>
            <person name="Stevens C."/>
            <person name="Harley J."/>
            <person name="Holt K."/>
            <person name="Panagiotidis G."/>
            <person name="Lovell J."/>
            <person name="Beasley H."/>
            <person name="Henderson C."/>
            <person name="Gordon D."/>
            <person name="Auger K."/>
            <person name="Wright D."/>
            <person name="Collins J."/>
            <person name="Raisen C."/>
            <person name="Dyer L."/>
            <person name="Leung K."/>
            <person name="Robertson L."/>
            <person name="Ambridge K."/>
            <person name="Leongamornlert D."/>
            <person name="McGuire S."/>
            <person name="Gilderthorp R."/>
            <person name="Griffiths C."/>
            <person name="Manthravadi D."/>
            <person name="Nichol S."/>
            <person name="Barker G."/>
            <person name="Whitehead S."/>
            <person name="Kay M."/>
            <person name="Brown J."/>
            <person name="Murnane C."/>
            <person name="Gray E."/>
            <person name="Humphries M."/>
            <person name="Sycamore N."/>
            <person name="Barker D."/>
            <person name="Saunders D."/>
            <person name="Wallis J."/>
            <person name="Babbage A."/>
            <person name="Hammond S."/>
            <person name="Mashreghi-Mohammadi M."/>
            <person name="Barr L."/>
            <person name="Martin S."/>
            <person name="Wray P."/>
            <person name="Ellington A."/>
            <person name="Matthews N."/>
            <person name="Ellwood M."/>
            <person name="Woodmansey R."/>
            <person name="Clark G."/>
            <person name="Cooper J."/>
            <person name="Tromans A."/>
            <person name="Grafham D."/>
            <person name="Skuce C."/>
            <person name="Pandian R."/>
            <person name="Andrews R."/>
            <person name="Harrison E."/>
            <person name="Kimberley A."/>
            <person name="Garnett J."/>
            <person name="Fosker N."/>
            <person name="Hall R."/>
            <person name="Garner P."/>
            <person name="Kelly D."/>
            <person name="Bird C."/>
            <person name="Palmer S."/>
            <person name="Gehring I."/>
            <person name="Berger A."/>
            <person name="Dooley C.M."/>
            <person name="Ersan-Urun Z."/>
            <person name="Eser C."/>
            <person name="Geiger H."/>
            <person name="Geisler M."/>
            <person name="Karotki L."/>
            <person name="Kirn A."/>
            <person name="Konantz J."/>
            <person name="Konantz M."/>
            <person name="Oberlander M."/>
            <person name="Rudolph-Geiger S."/>
            <person name="Teucke M."/>
            <person name="Lanz C."/>
            <person name="Raddatz G."/>
            <person name="Osoegawa K."/>
            <person name="Zhu B."/>
            <person name="Rapp A."/>
            <person name="Widaa S."/>
            <person name="Langford C."/>
            <person name="Yang F."/>
            <person name="Schuster S.C."/>
            <person name="Carter N.P."/>
            <person name="Harrow J."/>
            <person name="Ning Z."/>
            <person name="Herrero J."/>
            <person name="Searle S.M."/>
            <person name="Enright A."/>
            <person name="Geisler R."/>
            <person name="Plasterk R.H."/>
            <person name="Lee C."/>
            <person name="Westerfield M."/>
            <person name="de Jong P.J."/>
            <person name="Zon L.I."/>
            <person name="Postlethwait J.H."/>
            <person name="Nusslein-Volhard C."/>
            <person name="Hubbard T.J."/>
            <person name="Roest Crollius H."/>
            <person name="Rogers J."/>
            <person name="Stemple D.L."/>
        </authorList>
    </citation>
    <scope>NUCLEOTIDE SEQUENCE [LARGE SCALE GENOMIC DNA]</scope>
    <source>
        <strain>Tuebingen</strain>
    </source>
</reference>
<reference key="2">
    <citation type="submission" date="2004-12" db="EMBL/GenBank/DDBJ databases">
        <authorList>
            <consortium name="NIH - Zebrafish Gene Collection (ZGC) project"/>
        </authorList>
    </citation>
    <scope>NUCLEOTIDE SEQUENCE [LARGE SCALE MRNA]</scope>
    <source>
        <tissue>Brain</tissue>
    </source>
</reference>
<reference key="3">
    <citation type="journal article" date="2010" name="Dev. Cell">
        <title>Broad-minded links cell cycle-related kinase to cilia assembly and hedgehog signal transduction.</title>
        <authorList>
            <person name="Ko H.W."/>
            <person name="Norman R.X."/>
            <person name="Tran J."/>
            <person name="Fuller K.P."/>
            <person name="Fukuda M."/>
            <person name="Eggenschwiler J.T."/>
        </authorList>
    </citation>
    <scope>DISRUPTION PHENOTYPE</scope>
    <scope>FUNCTION</scope>
</reference>
<dbReference type="EC" id="2.7.11.22"/>
<dbReference type="EMBL" id="BX571687">
    <property type="protein sequence ID" value="CAP19557.1"/>
    <property type="molecule type" value="Genomic_DNA"/>
</dbReference>
<dbReference type="EMBL" id="BC086697">
    <property type="protein sequence ID" value="AAH86697.1"/>
    <property type="status" value="ALT_FRAME"/>
    <property type="molecule type" value="mRNA"/>
</dbReference>
<dbReference type="RefSeq" id="NP_001008655.1">
    <property type="nucleotide sequence ID" value="NM_001008655.1"/>
</dbReference>
<dbReference type="RefSeq" id="XP_005166746.1">
    <property type="nucleotide sequence ID" value="XM_005166689.5"/>
</dbReference>
<dbReference type="SMR" id="A8WIP6"/>
<dbReference type="FunCoup" id="A8WIP6">
    <property type="interactions" value="678"/>
</dbReference>
<dbReference type="STRING" id="7955.ENSDARP00000113146"/>
<dbReference type="PaxDb" id="7955-ENSDARP00000113146"/>
<dbReference type="Ensembl" id="ENSDART00000140098">
    <property type="protein sequence ID" value="ENSDARP00000113146"/>
    <property type="gene ID" value="ENSDARG00000003867"/>
</dbReference>
<dbReference type="GeneID" id="494112"/>
<dbReference type="KEGG" id="dre:494112"/>
<dbReference type="AGR" id="ZFIN:ZDB-GENE-041212-84"/>
<dbReference type="CTD" id="23552"/>
<dbReference type="ZFIN" id="ZDB-GENE-041212-84">
    <property type="gene designation" value="cdk20"/>
</dbReference>
<dbReference type="eggNOG" id="KOG0659">
    <property type="taxonomic scope" value="Eukaryota"/>
</dbReference>
<dbReference type="HOGENOM" id="CLU_000288_181_1_1"/>
<dbReference type="InParanoid" id="A8WIP6"/>
<dbReference type="OMA" id="KITFPYH"/>
<dbReference type="OrthoDB" id="63265at2759"/>
<dbReference type="PhylomeDB" id="A8WIP6"/>
<dbReference type="TreeFam" id="TF327240"/>
<dbReference type="PRO" id="PR:A8WIP6"/>
<dbReference type="Proteomes" id="UP000000437">
    <property type="component" value="Chromosome 8"/>
</dbReference>
<dbReference type="Bgee" id="ENSDARG00000003867">
    <property type="expression patterns" value="Expressed in testis and 15 other cell types or tissues"/>
</dbReference>
<dbReference type="ExpressionAtlas" id="A8WIP6">
    <property type="expression patterns" value="baseline"/>
</dbReference>
<dbReference type="GO" id="GO:0005929">
    <property type="term" value="C:cilium"/>
    <property type="evidence" value="ECO:0007669"/>
    <property type="project" value="UniProtKB-SubCell"/>
</dbReference>
<dbReference type="GO" id="GO:0005737">
    <property type="term" value="C:cytoplasm"/>
    <property type="evidence" value="ECO:0007669"/>
    <property type="project" value="UniProtKB-SubCell"/>
</dbReference>
<dbReference type="GO" id="GO:0005634">
    <property type="term" value="C:nucleus"/>
    <property type="evidence" value="ECO:0000318"/>
    <property type="project" value="GO_Central"/>
</dbReference>
<dbReference type="GO" id="GO:0005524">
    <property type="term" value="F:ATP binding"/>
    <property type="evidence" value="ECO:0007669"/>
    <property type="project" value="UniProtKB-KW"/>
</dbReference>
<dbReference type="GO" id="GO:0004693">
    <property type="term" value="F:cyclin-dependent protein serine/threonine kinase activity"/>
    <property type="evidence" value="ECO:0007669"/>
    <property type="project" value="UniProtKB-EC"/>
</dbReference>
<dbReference type="GO" id="GO:0106310">
    <property type="term" value="F:protein serine kinase activity"/>
    <property type="evidence" value="ECO:0007669"/>
    <property type="project" value="RHEA"/>
</dbReference>
<dbReference type="GO" id="GO:0004674">
    <property type="term" value="F:protein serine/threonine kinase activity"/>
    <property type="evidence" value="ECO:0000318"/>
    <property type="project" value="GO_Central"/>
</dbReference>
<dbReference type="GO" id="GO:0051301">
    <property type="term" value="P:cell division"/>
    <property type="evidence" value="ECO:0007669"/>
    <property type="project" value="UniProtKB-KW"/>
</dbReference>
<dbReference type="GO" id="GO:0060271">
    <property type="term" value="P:cilium assembly"/>
    <property type="evidence" value="ECO:0000315"/>
    <property type="project" value="ZFIN"/>
</dbReference>
<dbReference type="CDD" id="cd07832">
    <property type="entry name" value="STKc_CCRK"/>
    <property type="match status" value="1"/>
</dbReference>
<dbReference type="FunFam" id="1.10.510.10:FF:000406">
    <property type="entry name" value="cyclin-dependent kinase 20 isoform X1"/>
    <property type="match status" value="1"/>
</dbReference>
<dbReference type="FunFam" id="3.30.200.20:FF:000211">
    <property type="entry name" value="Putative cyclin-dependent kinase 20"/>
    <property type="match status" value="1"/>
</dbReference>
<dbReference type="Gene3D" id="3.30.200.20">
    <property type="entry name" value="Phosphorylase Kinase, domain 1"/>
    <property type="match status" value="1"/>
</dbReference>
<dbReference type="Gene3D" id="1.10.510.10">
    <property type="entry name" value="Transferase(Phosphotransferase) domain 1"/>
    <property type="match status" value="1"/>
</dbReference>
<dbReference type="InterPro" id="IPR050108">
    <property type="entry name" value="CDK"/>
</dbReference>
<dbReference type="InterPro" id="IPR048002">
    <property type="entry name" value="CDK20-like_STKc"/>
</dbReference>
<dbReference type="InterPro" id="IPR011009">
    <property type="entry name" value="Kinase-like_dom_sf"/>
</dbReference>
<dbReference type="InterPro" id="IPR000719">
    <property type="entry name" value="Prot_kinase_dom"/>
</dbReference>
<dbReference type="InterPro" id="IPR017441">
    <property type="entry name" value="Protein_kinase_ATP_BS"/>
</dbReference>
<dbReference type="InterPro" id="IPR008271">
    <property type="entry name" value="Ser/Thr_kinase_AS"/>
</dbReference>
<dbReference type="PANTHER" id="PTHR24056">
    <property type="entry name" value="CELL DIVISION PROTEIN KINASE"/>
    <property type="match status" value="1"/>
</dbReference>
<dbReference type="PANTHER" id="PTHR24056:SF171">
    <property type="entry name" value="CYCLIN-DEPENDENT KINASE 20"/>
    <property type="match status" value="1"/>
</dbReference>
<dbReference type="Pfam" id="PF00069">
    <property type="entry name" value="Pkinase"/>
    <property type="match status" value="1"/>
</dbReference>
<dbReference type="SMART" id="SM00220">
    <property type="entry name" value="S_TKc"/>
    <property type="match status" value="1"/>
</dbReference>
<dbReference type="SUPFAM" id="SSF56112">
    <property type="entry name" value="Protein kinase-like (PK-like)"/>
    <property type="match status" value="1"/>
</dbReference>
<dbReference type="PROSITE" id="PS00107">
    <property type="entry name" value="PROTEIN_KINASE_ATP"/>
    <property type="match status" value="1"/>
</dbReference>
<dbReference type="PROSITE" id="PS50011">
    <property type="entry name" value="PROTEIN_KINASE_DOM"/>
    <property type="match status" value="1"/>
</dbReference>
<dbReference type="PROSITE" id="PS00108">
    <property type="entry name" value="PROTEIN_KINASE_ST"/>
    <property type="match status" value="1"/>
</dbReference>
<evidence type="ECO:0000250" key="1"/>
<evidence type="ECO:0000255" key="2">
    <source>
        <dbReference type="PROSITE-ProRule" id="PRU00159"/>
    </source>
</evidence>
<evidence type="ECO:0000255" key="3">
    <source>
        <dbReference type="PROSITE-ProRule" id="PRU10027"/>
    </source>
</evidence>
<evidence type="ECO:0000269" key="4">
    <source>
    </source>
</evidence>
<evidence type="ECO:0000305" key="5"/>
<feature type="chain" id="PRO_0000393616" description="Cyclin-dependent kinase 20">
    <location>
        <begin position="1"/>
        <end position="344"/>
    </location>
</feature>
<feature type="domain" description="Protein kinase" evidence="2">
    <location>
        <begin position="4"/>
        <end position="288"/>
    </location>
</feature>
<feature type="active site" description="Proton acceptor" evidence="2 3">
    <location>
        <position position="127"/>
    </location>
</feature>
<feature type="binding site" evidence="2">
    <location>
        <begin position="10"/>
        <end position="18"/>
    </location>
    <ligand>
        <name>ATP</name>
        <dbReference type="ChEBI" id="CHEBI:30616"/>
    </ligand>
</feature>
<feature type="binding site" evidence="2">
    <location>
        <position position="33"/>
    </location>
    <ligand>
        <name>ATP</name>
        <dbReference type="ChEBI" id="CHEBI:30616"/>
    </ligand>
</feature>
<protein>
    <recommendedName>
        <fullName>Cyclin-dependent kinase 20</fullName>
        <ecNumber>2.7.11.22</ecNumber>
    </recommendedName>
    <alternativeName>
        <fullName>Cell cycle-related kinase</fullName>
    </alternativeName>
    <alternativeName>
        <fullName>Cell division protein kinase 20</fullName>
    </alternativeName>
</protein>
<organism>
    <name type="scientific">Danio rerio</name>
    <name type="common">Zebrafish</name>
    <name type="synonym">Brachydanio rerio</name>
    <dbReference type="NCBI Taxonomy" id="7955"/>
    <lineage>
        <taxon>Eukaryota</taxon>
        <taxon>Metazoa</taxon>
        <taxon>Chordata</taxon>
        <taxon>Craniata</taxon>
        <taxon>Vertebrata</taxon>
        <taxon>Euteleostomi</taxon>
        <taxon>Actinopterygii</taxon>
        <taxon>Neopterygii</taxon>
        <taxon>Teleostei</taxon>
        <taxon>Ostariophysi</taxon>
        <taxon>Cypriniformes</taxon>
        <taxon>Danionidae</taxon>
        <taxon>Danioninae</taxon>
        <taxon>Danio</taxon>
    </lineage>
</organism>
<sequence length="344" mass="39025">MDQYSILGRIGEGAHGIVFKAKHIETGETVALKKVALRRLEDGIPNQALREIKALQEIEDNQYVVKLKDVFPHGTGFVLVFEYMLSDLSEVIRNSQRPLTASQVKSYMMMLLKGVAFCHENSIMHRDLKPANLLISSTGHLKIADFGLARLFSNEGDRLYSHQVATRWYRAPELLYGARKYDEGVDLWAVGCIFGELLNNSPLFPGENDIEQLCCVLRVLGTPNQKVWPEITELPDYNKITFKENPPIPLEEIVPDTSPQAVDLLKKFLVYPSKQRISARQALLHPYFFTDPLPAHHSELPIPQRGGKHSRQRMQPPHEFTVDRPLHESVVDPSLIQKHAMSCS</sequence>
<keyword id="KW-0067">ATP-binding</keyword>
<keyword id="KW-0131">Cell cycle</keyword>
<keyword id="KW-0132">Cell division</keyword>
<keyword id="KW-0966">Cell projection</keyword>
<keyword id="KW-0969">Cilium</keyword>
<keyword id="KW-0963">Cytoplasm</keyword>
<keyword id="KW-0217">Developmental protein</keyword>
<keyword id="KW-0418">Kinase</keyword>
<keyword id="KW-0547">Nucleotide-binding</keyword>
<keyword id="KW-0539">Nucleus</keyword>
<keyword id="KW-1185">Reference proteome</keyword>
<keyword id="KW-0723">Serine/threonine-protein kinase</keyword>
<keyword id="KW-0808">Transferase</keyword>